<proteinExistence type="evidence at protein level"/>
<dbReference type="EC" id="1.13.11.3" evidence="5"/>
<dbReference type="EMBL" id="AM270300">
    <property type="protein sequence ID" value="CAK41599.1"/>
    <property type="molecule type" value="Genomic_DNA"/>
</dbReference>
<dbReference type="RefSeq" id="XP_001396338.1">
    <property type="nucleotide sequence ID" value="XM_001396301.1"/>
</dbReference>
<dbReference type="SMR" id="A2R1P9"/>
<dbReference type="EnsemblFungi" id="CAK41599">
    <property type="protein sequence ID" value="CAK41599"/>
    <property type="gene ID" value="An13g02000"/>
</dbReference>
<dbReference type="GeneID" id="4986648"/>
<dbReference type="KEGG" id="ang:An13g02000"/>
<dbReference type="VEuPathDB" id="FungiDB:An13g02000"/>
<dbReference type="HOGENOM" id="CLU_046727_1_1_1"/>
<dbReference type="Proteomes" id="UP000006706">
    <property type="component" value="Chromosome 2L"/>
</dbReference>
<dbReference type="GO" id="GO:0018576">
    <property type="term" value="F:catechol 1,2-dioxygenase activity"/>
    <property type="evidence" value="ECO:0007669"/>
    <property type="project" value="UniProtKB-EC"/>
</dbReference>
<dbReference type="GO" id="GO:0008199">
    <property type="term" value="F:ferric iron binding"/>
    <property type="evidence" value="ECO:0007669"/>
    <property type="project" value="InterPro"/>
</dbReference>
<dbReference type="GO" id="GO:0018578">
    <property type="term" value="F:protocatechuate 3,4-dioxygenase activity"/>
    <property type="evidence" value="ECO:0007669"/>
    <property type="project" value="RHEA"/>
</dbReference>
<dbReference type="GO" id="GO:0009056">
    <property type="term" value="P:catabolic process"/>
    <property type="evidence" value="ECO:0007669"/>
    <property type="project" value="UniProtKB-KW"/>
</dbReference>
<dbReference type="GO" id="GO:0009712">
    <property type="term" value="P:catechol-containing compound metabolic process"/>
    <property type="evidence" value="ECO:0007669"/>
    <property type="project" value="InterPro"/>
</dbReference>
<dbReference type="Gene3D" id="2.60.130.10">
    <property type="entry name" value="Aromatic compound dioxygenase"/>
    <property type="match status" value="1"/>
</dbReference>
<dbReference type="InterPro" id="IPR007535">
    <property type="entry name" value="Catechol_dOase_N"/>
</dbReference>
<dbReference type="InterPro" id="IPR000627">
    <property type="entry name" value="Intradiol_dOase_C"/>
</dbReference>
<dbReference type="InterPro" id="IPR015889">
    <property type="entry name" value="Intradiol_dOase_core"/>
</dbReference>
<dbReference type="InterPro" id="IPR050770">
    <property type="entry name" value="Intradiol_RC_Dioxygenase"/>
</dbReference>
<dbReference type="PANTHER" id="PTHR33711">
    <property type="entry name" value="DIOXYGENASE, PUTATIVE (AFU_ORTHOLOGUE AFUA_2G02910)-RELATED"/>
    <property type="match status" value="1"/>
</dbReference>
<dbReference type="PANTHER" id="PTHR33711:SF5">
    <property type="entry name" value="INTRADIOL RING-CLEAVAGE DIOXYGENASE PRCA"/>
    <property type="match status" value="1"/>
</dbReference>
<dbReference type="Pfam" id="PF00775">
    <property type="entry name" value="Dioxygenase_C"/>
    <property type="match status" value="1"/>
</dbReference>
<dbReference type="Pfam" id="PF04444">
    <property type="entry name" value="Dioxygenase_N"/>
    <property type="match status" value="1"/>
</dbReference>
<dbReference type="SUPFAM" id="SSF49482">
    <property type="entry name" value="Aromatic compound dioxygenase"/>
    <property type="match status" value="1"/>
</dbReference>
<name>PRCA_ASPNC</name>
<keyword id="KW-0058">Aromatic hydrocarbons catabolism</keyword>
<keyword id="KW-0223">Dioxygenase</keyword>
<keyword id="KW-0408">Iron</keyword>
<keyword id="KW-0479">Metal-binding</keyword>
<keyword id="KW-0560">Oxidoreductase</keyword>
<keyword id="KW-1185">Reference proteome</keyword>
<reference key="1">
    <citation type="journal article" date="2007" name="Nat. Biotechnol.">
        <title>Genome sequencing and analysis of the versatile cell factory Aspergillus niger CBS 513.88.</title>
        <authorList>
            <person name="Pel H.J."/>
            <person name="de Winde J.H."/>
            <person name="Archer D.B."/>
            <person name="Dyer P.S."/>
            <person name="Hofmann G."/>
            <person name="Schaap P.J."/>
            <person name="Turner G."/>
            <person name="de Vries R.P."/>
            <person name="Albang R."/>
            <person name="Albermann K."/>
            <person name="Andersen M.R."/>
            <person name="Bendtsen J.D."/>
            <person name="Benen J.A.E."/>
            <person name="van den Berg M."/>
            <person name="Breestraat S."/>
            <person name="Caddick M.X."/>
            <person name="Contreras R."/>
            <person name="Cornell M."/>
            <person name="Coutinho P.M."/>
            <person name="Danchin E.G.J."/>
            <person name="Debets A.J.M."/>
            <person name="Dekker P."/>
            <person name="van Dijck P.W.M."/>
            <person name="van Dijk A."/>
            <person name="Dijkhuizen L."/>
            <person name="Driessen A.J.M."/>
            <person name="d'Enfert C."/>
            <person name="Geysens S."/>
            <person name="Goosen C."/>
            <person name="Groot G.S.P."/>
            <person name="de Groot P.W.J."/>
            <person name="Guillemette T."/>
            <person name="Henrissat B."/>
            <person name="Herweijer M."/>
            <person name="van den Hombergh J.P.T.W."/>
            <person name="van den Hondel C.A.M.J.J."/>
            <person name="van der Heijden R.T.J.M."/>
            <person name="van der Kaaij R.M."/>
            <person name="Klis F.M."/>
            <person name="Kools H.J."/>
            <person name="Kubicek C.P."/>
            <person name="van Kuyk P.A."/>
            <person name="Lauber J."/>
            <person name="Lu X."/>
            <person name="van der Maarel M.J.E.C."/>
            <person name="Meulenberg R."/>
            <person name="Menke H."/>
            <person name="Mortimer M.A."/>
            <person name="Nielsen J."/>
            <person name="Oliver S.G."/>
            <person name="Olsthoorn M."/>
            <person name="Pal K."/>
            <person name="van Peij N.N.M.E."/>
            <person name="Ram A.F.J."/>
            <person name="Rinas U."/>
            <person name="Roubos J.A."/>
            <person name="Sagt C.M.J."/>
            <person name="Schmoll M."/>
            <person name="Sun J."/>
            <person name="Ussery D."/>
            <person name="Varga J."/>
            <person name="Vervecken W."/>
            <person name="van de Vondervoort P.J.J."/>
            <person name="Wedler H."/>
            <person name="Woesten H.A.B."/>
            <person name="Zeng A.-P."/>
            <person name="van Ooyen A.J.J."/>
            <person name="Visser J."/>
            <person name="Stam H."/>
        </authorList>
    </citation>
    <scope>NUCLEOTIDE SEQUENCE [LARGE SCALE GENOMIC DNA]</scope>
    <source>
        <strain>ATCC MYA-4892 / CBS 513.88 / FGSC A1513</strain>
    </source>
</reference>
<reference key="2">
    <citation type="journal article" date="2019" name="ACS Sustain. Chem. Eng.">
        <title>Discovery of novel p-hydroxybenzoate-m-hydroxylase, protocatechuate 3,4 ring-cleavage dioxygenase, and hydroxyquinol 1,2 ring-cleavage dioxygenase from the filamentous fungus Aspergillus niger.</title>
        <authorList>
            <person name="Lubbers R.J.M."/>
            <person name="Dilokpimol A."/>
            <person name="Peng M."/>
            <person name="Visser J."/>
            <person name="Makela M.R."/>
            <person name="Hilden K.S."/>
            <person name="de Vries R.P."/>
        </authorList>
    </citation>
    <scope>INDUCTION</scope>
    <scope>FUNCTION</scope>
    <scope>DISRUPTION PHENOTYPE</scope>
    <scope>CATALYTIC ACTIVITY</scope>
    <scope>SUBUNIT</scope>
</reference>
<sequence length="315" mass="35321">MSTNRRFDPNFTPYVVNSMGPKTPERARVVLGALIRHIHDFAREVELTSAEWMLGVEFINSIGKISTPIRNECHRICDVIGLESLVDEIANKIVTEDGVSPTSNVILGPFWSPNAPFRELGDSIIQDPNPNGKVTYMHGVLKDMETGAPIVGAVLDIWQASANGQYDFQDPNQSENNLRGKFRSNEKGEFNWYCYHPTPYSLPTDGPAGVLLNLMDRSPMRPAHIHLMITHPDYATVINQIYPSDDPHLDIDSVFAVKDDLVVDFKPKTDDPKAQLDLEYNVTMALKKHHPNPNSAPPVSSFERFNKASKTQEKL</sequence>
<protein>
    <recommendedName>
        <fullName evidence="6">Intradiol ring-cleavage dioxygenase prcA</fullName>
        <ecNumber evidence="5">1.13.11.3</ecNumber>
    </recommendedName>
    <alternativeName>
        <fullName evidence="6">Protocatechuate 3,4-dioxygenase A</fullName>
    </alternativeName>
</protein>
<accession>A2R1P9</accession>
<organism>
    <name type="scientific">Aspergillus niger (strain ATCC MYA-4892 / CBS 513.88 / FGSC A1513)</name>
    <dbReference type="NCBI Taxonomy" id="425011"/>
    <lineage>
        <taxon>Eukaryota</taxon>
        <taxon>Fungi</taxon>
        <taxon>Dikarya</taxon>
        <taxon>Ascomycota</taxon>
        <taxon>Pezizomycotina</taxon>
        <taxon>Eurotiomycetes</taxon>
        <taxon>Eurotiomycetidae</taxon>
        <taxon>Eurotiales</taxon>
        <taxon>Aspergillaceae</taxon>
        <taxon>Aspergillus</taxon>
        <taxon>Aspergillus subgen. Circumdati</taxon>
    </lineage>
</organism>
<gene>
    <name evidence="6" type="primary">prcA</name>
    <name type="ORF">An13g02000</name>
</gene>
<comment type="function">
    <text evidence="1 5">Intradiol ring-cleavage dioxygenase; part of the benzoic acid degradation pathway also known as the protocatechuic acid pathway (Ref.2). Benzoic acid debradation begins with the conversion of benzoic acid into 4-hydroxybenzoic acid through hydroxylation by the benzoate-4-monooxygenase bphA, and its partner NADPH-cytochrome P450 reductase cprA which act as a mediator in electron donation from NADPH (By similarity). 4-Hydroxybenzoic acid is then converted into 3,4-dihydroxybenzoic acid (also called protocatechuic acid) by the p-hydroxybenzoate-m-hydroxylase phhA (Ref.2). Protocatechuic acid is converted into 3-carboxy-cis,cis-muconic acid by the intradiol ring-cleavage dioxygenase prcA, which is further metabolized through the 3-oxoadipate pathway to finally enter the tricarboxylic acid cycle (TCA) (Ref.2).</text>
</comment>
<comment type="catalytic activity">
    <reaction evidence="5">
        <text>3,4-dihydroxybenzoate + O2 = 3-carboxy-cis,cis-muconate + 2 H(+)</text>
        <dbReference type="Rhea" id="RHEA:10084"/>
        <dbReference type="ChEBI" id="CHEBI:15378"/>
        <dbReference type="ChEBI" id="CHEBI:15379"/>
        <dbReference type="ChEBI" id="CHEBI:36241"/>
        <dbReference type="ChEBI" id="CHEBI:57496"/>
        <dbReference type="EC" id="1.13.11.3"/>
    </reaction>
    <physiologicalReaction direction="left-to-right" evidence="5">
        <dbReference type="Rhea" id="RHEA:10085"/>
    </physiologicalReaction>
</comment>
<comment type="cofactor">
    <cofactor evidence="2">
        <name>Fe(3+)</name>
        <dbReference type="ChEBI" id="CHEBI:29034"/>
    </cofactor>
    <text evidence="2">Binds 1 Fe(3+) ion per subunit.</text>
</comment>
<comment type="subunit">
    <text evidence="5">Homodimer.</text>
</comment>
<comment type="induction">
    <text evidence="5">Expression is induced in the presence of caffeic acid, p-coumaric acid, p-hydroxybenzoic acid, protocatechuic acid, and benzoic acid.</text>
</comment>
<comment type="disruption phenotype">
    <text evidence="5">Abolishes growth on benzoic acid, benzaldehyde, benzyl alcohol, p-anisic acid, p-anisyl alcohol, m-hydroxybenzoic acid and p-hydroxybenzoic acid; and reduces growth on p-coumaric acid, cinnamic acid, protocatechuic acid, p-coumaric acid, and caffeic acid.</text>
</comment>
<comment type="similarity">
    <text evidence="7">Belongs to the intradiol ring-cleavage dioxygenase family.</text>
</comment>
<evidence type="ECO:0000250" key="1">
    <source>
        <dbReference type="UniProtKB" id="A2QTW5"/>
    </source>
</evidence>
<evidence type="ECO:0000250" key="2">
    <source>
        <dbReference type="UniProtKB" id="P86029"/>
    </source>
</evidence>
<evidence type="ECO:0000250" key="3">
    <source>
        <dbReference type="UniProtKB" id="Q5PXQ6"/>
    </source>
</evidence>
<evidence type="ECO:0000256" key="4">
    <source>
        <dbReference type="SAM" id="MobiDB-lite"/>
    </source>
</evidence>
<evidence type="ECO:0000269" key="5">
    <source ref="2"/>
</evidence>
<evidence type="ECO:0000303" key="6">
    <source ref="2"/>
</evidence>
<evidence type="ECO:0000305" key="7"/>
<feature type="chain" id="PRO_0000453618" description="Intradiol ring-cleavage dioxygenase prcA">
    <location>
        <begin position="1"/>
        <end position="315"/>
    </location>
</feature>
<feature type="region of interest" description="Disordered" evidence="4">
    <location>
        <begin position="287"/>
        <end position="315"/>
    </location>
</feature>
<feature type="compositionally biased region" description="Basic and acidic residues" evidence="4">
    <location>
        <begin position="304"/>
        <end position="315"/>
    </location>
</feature>
<feature type="binding site" evidence="3">
    <location>
        <position position="166"/>
    </location>
    <ligand>
        <name>Fe cation</name>
        <dbReference type="ChEBI" id="CHEBI:24875"/>
    </ligand>
</feature>
<feature type="binding site" evidence="3">
    <location>
        <position position="200"/>
    </location>
    <ligand>
        <name>Fe cation</name>
        <dbReference type="ChEBI" id="CHEBI:24875"/>
    </ligand>
</feature>
<feature type="binding site" evidence="3">
    <location>
        <position position="224"/>
    </location>
    <ligand>
        <name>Fe cation</name>
        <dbReference type="ChEBI" id="CHEBI:24875"/>
    </ligand>
</feature>
<feature type="binding site" evidence="3">
    <location>
        <position position="226"/>
    </location>
    <ligand>
        <name>Fe cation</name>
        <dbReference type="ChEBI" id="CHEBI:24875"/>
    </ligand>
</feature>